<organism>
    <name type="scientific">Escherichia coli (strain SE11)</name>
    <dbReference type="NCBI Taxonomy" id="409438"/>
    <lineage>
        <taxon>Bacteria</taxon>
        <taxon>Pseudomonadati</taxon>
        <taxon>Pseudomonadota</taxon>
        <taxon>Gammaproteobacteria</taxon>
        <taxon>Enterobacterales</taxon>
        <taxon>Enterobacteriaceae</taxon>
        <taxon>Escherichia</taxon>
    </lineage>
</organism>
<reference key="1">
    <citation type="journal article" date="2008" name="DNA Res.">
        <title>Complete genome sequence and comparative analysis of the wild-type commensal Escherichia coli strain SE11 isolated from a healthy adult.</title>
        <authorList>
            <person name="Oshima K."/>
            <person name="Toh H."/>
            <person name="Ogura Y."/>
            <person name="Sasamoto H."/>
            <person name="Morita H."/>
            <person name="Park S.-H."/>
            <person name="Ooka T."/>
            <person name="Iyoda S."/>
            <person name="Taylor T.D."/>
            <person name="Hayashi T."/>
            <person name="Itoh K."/>
            <person name="Hattori M."/>
        </authorList>
    </citation>
    <scope>NUCLEOTIDE SEQUENCE [LARGE SCALE GENOMIC DNA]</scope>
    <source>
        <strain>SE11</strain>
    </source>
</reference>
<protein>
    <recommendedName>
        <fullName>mgtA leader peptide</fullName>
    </recommendedName>
    <alternativeName>
        <fullName>Regulatory leader peptide for mgtA</fullName>
    </alternativeName>
</protein>
<feature type="chain" id="PRO_0000403452" description="mgtA leader peptide">
    <location>
        <begin position="1"/>
        <end position="17"/>
    </location>
</feature>
<evidence type="ECO:0000250" key="1"/>
<evidence type="ECO:0000305" key="2"/>
<comment type="function">
    <text evidence="1">Makes mgtA transcription sensitive to intracellular proline levels. Under low levels of proline this protein cannot be fully translated, and a stem loop forms which permits transcription of the downstream mgtA gene (By similarity).</text>
</comment>
<comment type="similarity">
    <text evidence="2">Belongs to the MgtL family.</text>
</comment>
<comment type="sequence caution" evidence="2">
    <conflict type="erroneous initiation">
        <sequence resource="EMBL-CDS" id="BAG80071"/>
    </conflict>
    <text>Extended N-terminus.</text>
</comment>
<dbReference type="EMBL" id="AP009240">
    <property type="protein sequence ID" value="BAG80071.1"/>
    <property type="status" value="ALT_INIT"/>
    <property type="molecule type" value="Genomic_DNA"/>
</dbReference>
<dbReference type="RefSeq" id="WP_001387276.1">
    <property type="nucleotide sequence ID" value="NC_011415.1"/>
</dbReference>
<dbReference type="GeneID" id="93777583"/>
<dbReference type="KEGG" id="ecy:ECSE_4547"/>
<dbReference type="HOGENOM" id="CLU_2896927_0_0_6"/>
<dbReference type="Proteomes" id="UP000008199">
    <property type="component" value="Chromosome"/>
</dbReference>
<dbReference type="InterPro" id="IPR031434">
    <property type="entry name" value="MGTL"/>
</dbReference>
<dbReference type="Pfam" id="PF17059">
    <property type="entry name" value="MGTL"/>
    <property type="match status" value="1"/>
</dbReference>
<proteinExistence type="inferred from homology"/>
<sequence length="17" mass="2123">MEPDPTPLPRRRLKLFR</sequence>
<accession>B6I2F4</accession>
<name>LPMG_ECOSE</name>
<keyword id="KW-0428">Leader peptide</keyword>
<gene>
    <name type="primary">mgtL</name>
    <name type="ordered locus">ECSE_4547</name>
</gene>